<gene>
    <name evidence="1" type="primary">atpF</name>
</gene>
<feature type="chain" id="PRO_0000082400" description="ATP synthase subunit b, chloroplastic">
    <location>
        <begin position="1"/>
        <end position="184"/>
    </location>
</feature>
<feature type="transmembrane region" description="Helical" evidence="1">
    <location>
        <begin position="29"/>
        <end position="49"/>
    </location>
</feature>
<comment type="function">
    <text evidence="1">F(1)F(0) ATP synthase produces ATP from ADP in the presence of a proton or sodium gradient. F-type ATPases consist of two structural domains, F(1) containing the extramembraneous catalytic core and F(0) containing the membrane proton channel, linked together by a central stalk and a peripheral stalk. During catalysis, ATP synthesis in the catalytic domain of F(1) is coupled via a rotary mechanism of the central stalk subunits to proton translocation.</text>
</comment>
<comment type="function">
    <text evidence="1">Component of the F(0) channel, it forms part of the peripheral stalk, linking F(1) to F(0).</text>
</comment>
<comment type="subunit">
    <text evidence="1">F-type ATPases have 2 components, F(1) - the catalytic core - and F(0) - the membrane proton channel. F(1) has five subunits: alpha(3), beta(3), gamma(1), delta(1), epsilon(1). F(0) has four main subunits: a(1), b(1), b'(1) and c(10-14). The alpha and beta chains form an alternating ring which encloses part of the gamma chain. F(1) is attached to F(0) by a central stalk formed by the gamma and epsilon chains, while a peripheral stalk is formed by the delta, b and b' chains.</text>
</comment>
<comment type="subcellular location">
    <subcellularLocation>
        <location evidence="1">Plastid</location>
        <location evidence="1">Chloroplast thylakoid membrane</location>
        <topology evidence="1">Single-pass membrane protein</topology>
    </subcellularLocation>
</comment>
<comment type="RNA editing">
    <location>
        <position position="1" evidence="2"/>
    </location>
    <text>The initiator methionine is created by RNA editing.</text>
</comment>
<comment type="miscellaneous">
    <text>In plastids the F-type ATPase is also known as CF(1)CF(0).</text>
</comment>
<comment type="similarity">
    <text evidence="1">Belongs to the ATPase B chain family.</text>
</comment>
<name>ATPF_ADICA</name>
<sequence>MRSLSEIIAPSSYWTLAGTIGLNTNIFEINLINLILVLGILFYYGKGVLINLLENRERTILNTIQDAEERHKEATEKLQRARLRLQQAEMKADEIRIIGLTKMDRERRDLVDAADNDLRELEESKNYAIRFEKQRAIEQVRQQVSRLASERAFESLNGRLTNEFQLRMIDYHIGLLRAMANKST</sequence>
<proteinExistence type="evidence at transcript level"/>
<evidence type="ECO:0000255" key="1">
    <source>
        <dbReference type="HAMAP-Rule" id="MF_01398"/>
    </source>
</evidence>
<evidence type="ECO:0000269" key="2">
    <source>
    </source>
</evidence>
<protein>
    <recommendedName>
        <fullName evidence="1">ATP synthase subunit b, chloroplastic</fullName>
    </recommendedName>
    <alternativeName>
        <fullName evidence="1">ATP synthase F(0) sector subunit b</fullName>
    </alternativeName>
    <alternativeName>
        <fullName evidence="1">ATPase subunit I</fullName>
    </alternativeName>
</protein>
<dbReference type="EMBL" id="AY178864">
    <property type="protein sequence ID" value="AAP29378.2"/>
    <property type="molecule type" value="Genomic_DNA"/>
</dbReference>
<dbReference type="RefSeq" id="NP_848046.2">
    <property type="nucleotide sequence ID" value="NC_004766.1"/>
</dbReference>
<dbReference type="SMR" id="Q85FN3"/>
<dbReference type="GeneID" id="807366"/>
<dbReference type="GO" id="GO:0009535">
    <property type="term" value="C:chloroplast thylakoid membrane"/>
    <property type="evidence" value="ECO:0007669"/>
    <property type="project" value="UniProtKB-SubCell"/>
</dbReference>
<dbReference type="GO" id="GO:0045259">
    <property type="term" value="C:proton-transporting ATP synthase complex"/>
    <property type="evidence" value="ECO:0007669"/>
    <property type="project" value="UniProtKB-KW"/>
</dbReference>
<dbReference type="GO" id="GO:0005524">
    <property type="term" value="F:ATP binding"/>
    <property type="evidence" value="ECO:0007669"/>
    <property type="project" value="UniProtKB-KW"/>
</dbReference>
<dbReference type="GO" id="GO:0046933">
    <property type="term" value="F:proton-transporting ATP synthase activity, rotational mechanism"/>
    <property type="evidence" value="ECO:0007669"/>
    <property type="project" value="UniProtKB-UniRule"/>
</dbReference>
<dbReference type="CDD" id="cd06503">
    <property type="entry name" value="ATP-synt_Fo_b"/>
    <property type="match status" value="1"/>
</dbReference>
<dbReference type="HAMAP" id="MF_01398">
    <property type="entry name" value="ATP_synth_b_bprime"/>
    <property type="match status" value="1"/>
</dbReference>
<dbReference type="InterPro" id="IPR002146">
    <property type="entry name" value="ATP_synth_b/b'su_bac/chlpt"/>
</dbReference>
<dbReference type="PANTHER" id="PTHR34264">
    <property type="entry name" value="ATP SYNTHASE SUBUNIT B, CHLOROPLASTIC"/>
    <property type="match status" value="1"/>
</dbReference>
<dbReference type="PANTHER" id="PTHR34264:SF3">
    <property type="entry name" value="ATP SYNTHASE SUBUNIT B, CHLOROPLASTIC"/>
    <property type="match status" value="1"/>
</dbReference>
<dbReference type="Pfam" id="PF00430">
    <property type="entry name" value="ATP-synt_B"/>
    <property type="match status" value="1"/>
</dbReference>
<keyword id="KW-0066">ATP synthesis</keyword>
<keyword id="KW-0067">ATP-binding</keyword>
<keyword id="KW-0138">CF(0)</keyword>
<keyword id="KW-0150">Chloroplast</keyword>
<keyword id="KW-0375">Hydrogen ion transport</keyword>
<keyword id="KW-0406">Ion transport</keyword>
<keyword id="KW-0472">Membrane</keyword>
<keyword id="KW-0547">Nucleotide-binding</keyword>
<keyword id="KW-0934">Plastid</keyword>
<keyword id="KW-0691">RNA editing</keyword>
<keyword id="KW-0793">Thylakoid</keyword>
<keyword id="KW-0812">Transmembrane</keyword>
<keyword id="KW-1133">Transmembrane helix</keyword>
<keyword id="KW-0813">Transport</keyword>
<organism>
    <name type="scientific">Adiantum capillus-veneris</name>
    <name type="common">Maidenhair fern</name>
    <dbReference type="NCBI Taxonomy" id="13818"/>
    <lineage>
        <taxon>Eukaryota</taxon>
        <taxon>Viridiplantae</taxon>
        <taxon>Streptophyta</taxon>
        <taxon>Embryophyta</taxon>
        <taxon>Tracheophyta</taxon>
        <taxon>Polypodiopsida</taxon>
        <taxon>Polypodiidae</taxon>
        <taxon>Polypodiales</taxon>
        <taxon>Pteridineae</taxon>
        <taxon>Pteridaceae</taxon>
        <taxon>Vittarioideae</taxon>
        <taxon>Adiantum</taxon>
    </lineage>
</organism>
<reference key="1">
    <citation type="journal article" date="2003" name="DNA Res.">
        <title>Complete nucleotide sequence of the chloroplast genome from a leptosporangiate fern, Adiantum capillus-veneris L.</title>
        <authorList>
            <person name="Wolf P.G."/>
            <person name="Rowe C.A."/>
            <person name="Sinclair R.B."/>
            <person name="Hasebe M."/>
        </authorList>
    </citation>
    <scope>NUCLEOTIDE SEQUENCE [LARGE SCALE GENOMIC DNA]</scope>
</reference>
<reference key="2">
    <citation type="journal article" date="2004" name="Gene">
        <title>High levels of RNA editing in a vascular plant chloroplast genome: analysis of transcripts from the fern Adiantum capillus-veneris.</title>
        <authorList>
            <person name="Wolf P.G."/>
            <person name="Rowe C.A."/>
            <person name="Hasebe M."/>
        </authorList>
    </citation>
    <scope>NUCLEOTIDE SEQUENCE [GENOMIC DNA]</scope>
    <scope>RNA EDITING</scope>
    <source>
        <tissue>Frond</tissue>
    </source>
</reference>
<geneLocation type="chloroplast"/>
<accession>Q85FN3</accession>